<evidence type="ECO:0000250" key="1">
    <source>
        <dbReference type="UniProtKB" id="L0E2Z4"/>
    </source>
</evidence>
<evidence type="ECO:0000250" key="2">
    <source>
        <dbReference type="UniProtKB" id="O93868"/>
    </source>
</evidence>
<evidence type="ECO:0000255" key="3">
    <source>
        <dbReference type="PROSITE-ProRule" id="PRU10001"/>
    </source>
</evidence>
<evidence type="ECO:0000269" key="4">
    <source>
    </source>
</evidence>
<evidence type="ECO:0000269" key="5">
    <source>
    </source>
</evidence>
<evidence type="ECO:0000269" key="6">
    <source>
    </source>
</evidence>
<evidence type="ECO:0000269" key="7">
    <source>
    </source>
</evidence>
<evidence type="ECO:0000303" key="8">
    <source>
    </source>
</evidence>
<evidence type="ECO:0000305" key="9"/>
<protein>
    <recommendedName>
        <fullName evidence="8">Short chain dehydrogenase claC</fullName>
        <ecNumber evidence="6">1.1.1.-</ecNumber>
    </recommendedName>
    <alternativeName>
        <fullName evidence="8">Cladofulvin biosynthesis cluster protein C</fullName>
    </alternativeName>
</protein>
<comment type="function">
    <text evidence="4 6">Non-reducing polyketide synthase; part of the gene cluster that mediates the biosynthesis of the bianthraquinone cladofulvin, a conidial pigment not required for virulence but that plays a role in fitness and resistance to environmental stresses including UV light and low-temperature stress (PubMed:24465762, PubMed:27274078). The pathway begins with the synthesis of atrochrysone thioester by the polyketide synthase (PKS) claG. The atrochrysone carboxyl ACP thioesterase claF then breaks the thioester bond and releases the atrochrysone carboxylic acid from claG (PubMed:27274078). This compound is decarboxylated by claH to yield emodin, which is further converted to chrysophanol hydroquinone by the reductase claC and the dehydratase claB (PubMed:27274078). The cytochrome monooxygenase P450 claM then catalyzes the dimerization of nataloe-emodin to cladofulvin (PubMed:27274078).</text>
</comment>
<comment type="pathway">
    <text evidence="6">Pigment biosynthesis.</text>
</comment>
<comment type="induction">
    <text evidence="4 5 6 7">Expression is positively regulated by the transcriptional regulator wor1 (PubMed:24521437, PubMed:27274078). Expression is down-regulated during biotrophic growth within tomato leaves (PubMed:27997759). The expression is induced at later stages of infection when conidiophores emerge from the plant and produce conidia (PubMed:24465762).</text>
</comment>
<comment type="similarity">
    <text evidence="9">Belongs to the short-chain dehydrogenases/reductases (SDR) family.</text>
</comment>
<keyword id="KW-0521">NADP</keyword>
<keyword id="KW-0560">Oxidoreductase</keyword>
<gene>
    <name evidence="8" type="primary">claC</name>
    <name type="ORF">Clafu184391</name>
</gene>
<reference key="1">
    <citation type="journal article" date="2014" name="Mol. Microbiol.">
        <title>Functional analysis of the conserved transcriptional regulator CfWor1 in Cladosporium fulvum reveals diverse roles in the virulence of plant pathogenic fungi.</title>
        <authorList>
            <person name="Okmen B."/>
            <person name="Collemare J."/>
            <person name="Griffiths S."/>
            <person name="van der Burgt A."/>
            <person name="Cox R."/>
            <person name="de Wit P.J."/>
        </authorList>
    </citation>
    <scope>INDUCTION</scope>
</reference>
<reference key="2">
    <citation type="journal article" date="2014" name="PLoS ONE">
        <title>Secondary metabolism and biotrophic lifestyle in the tomato pathogen Cladosporium fulvum.</title>
        <authorList>
            <person name="Collemare J."/>
            <person name="Griffiths S."/>
            <person name="Iida Y."/>
            <person name="Karimi Jashni M."/>
            <person name="Battaglia E."/>
            <person name="Cox R.J."/>
            <person name="de Wit P.J."/>
        </authorList>
    </citation>
    <scope>IDENTIFICATION</scope>
    <scope>FUNCTION</scope>
    <scope>INDUCTION</scope>
</reference>
<reference key="3">
    <citation type="journal article" date="2016" name="Proc. Natl. Acad. Sci. U.S.A.">
        <title>Elucidation of cladofulvin biosynthesis reveals a cytochrome P450 monooxygenase required for anthraquinone dimerization.</title>
        <authorList>
            <person name="Griffiths S."/>
            <person name="Mesarich C.H."/>
            <person name="Saccomanno B."/>
            <person name="Vaisberg A."/>
            <person name="De Wit P.J."/>
            <person name="Cox R."/>
            <person name="Collemare J."/>
        </authorList>
    </citation>
    <scope>FUNCTION</scope>
    <scope>CATALYTIC ACTIVITY</scope>
    <scope>PATHWAY</scope>
</reference>
<reference key="4">
    <citation type="journal article" date="2018" name="Mol. Plant Pathol.">
        <title>Down-regulation of cladofulvin biosynthesis is required for biotrophic growth of Cladosporium fulvum on tomato.</title>
        <authorList>
            <person name="Griffiths S."/>
            <person name="Mesarich C.H."/>
            <person name="Overdijk E.J.R."/>
            <person name="Saccomanno B."/>
            <person name="de Wit P.J.G.M."/>
            <person name="Collemare J."/>
        </authorList>
    </citation>
    <scope>INDUCTION</scope>
</reference>
<proteinExistence type="evidence at protein level"/>
<name>CLAC_PASFU</name>
<accession>P0CU75</accession>
<sequence length="267" mass="28549">MAVVNGNYIPGRLDGRVAVVTGSGRGIGAAIAVHLGRLGANIVVNYANSALDAQKVVDQIKGAGSEAIAIKADIRDVSQIMRLFDEAVAHFGHVDIAVSNSGVVSFGHLKDVTEEEFDRVFSLNTRGQFFVAREAYRHLSEGGRIIMTSSNTSKDFSVPRHSLYSGSKGAVDSFVRIFSKDCGDKKITVNGVAPGGTVTDMFHDVSHHYIPDGEKYTAEQRQQMAAFASPLHRNGFPEDIANVVGFLASKEGEWINGKVINLDGGAA</sequence>
<dbReference type="EC" id="1.1.1.-" evidence="6"/>
<dbReference type="SMR" id="P0CU75"/>
<dbReference type="OMA" id="VGQRAWP"/>
<dbReference type="OrthoDB" id="47007at2759"/>
<dbReference type="GO" id="GO:0016614">
    <property type="term" value="F:oxidoreductase activity, acting on CH-OH group of donors"/>
    <property type="evidence" value="ECO:0007669"/>
    <property type="project" value="UniProtKB-ARBA"/>
</dbReference>
<dbReference type="FunFam" id="3.40.50.720:FF:000084">
    <property type="entry name" value="Short-chain dehydrogenase reductase"/>
    <property type="match status" value="1"/>
</dbReference>
<dbReference type="Gene3D" id="3.40.50.720">
    <property type="entry name" value="NAD(P)-binding Rossmann-like Domain"/>
    <property type="match status" value="1"/>
</dbReference>
<dbReference type="InterPro" id="IPR036291">
    <property type="entry name" value="NAD(P)-bd_dom_sf"/>
</dbReference>
<dbReference type="InterPro" id="IPR020904">
    <property type="entry name" value="Sc_DH/Rdtase_CS"/>
</dbReference>
<dbReference type="InterPro" id="IPR002347">
    <property type="entry name" value="SDR_fam"/>
</dbReference>
<dbReference type="PANTHER" id="PTHR48107">
    <property type="entry name" value="NADPH-DEPENDENT ALDEHYDE REDUCTASE-LIKE PROTEIN, CHLOROPLASTIC-RELATED"/>
    <property type="match status" value="1"/>
</dbReference>
<dbReference type="PANTHER" id="PTHR48107:SF7">
    <property type="entry name" value="RE15974P"/>
    <property type="match status" value="1"/>
</dbReference>
<dbReference type="Pfam" id="PF13561">
    <property type="entry name" value="adh_short_C2"/>
    <property type="match status" value="1"/>
</dbReference>
<dbReference type="PRINTS" id="PR00081">
    <property type="entry name" value="GDHRDH"/>
</dbReference>
<dbReference type="PRINTS" id="PR00080">
    <property type="entry name" value="SDRFAMILY"/>
</dbReference>
<dbReference type="SUPFAM" id="SSF51735">
    <property type="entry name" value="NAD(P)-binding Rossmann-fold domains"/>
    <property type="match status" value="1"/>
</dbReference>
<dbReference type="PROSITE" id="PS00061">
    <property type="entry name" value="ADH_SHORT"/>
    <property type="match status" value="1"/>
</dbReference>
<organism>
    <name type="scientific">Passalora fulva</name>
    <name type="common">Tomato leaf mold</name>
    <name type="synonym">Cladosporium fulvum</name>
    <dbReference type="NCBI Taxonomy" id="5499"/>
    <lineage>
        <taxon>Eukaryota</taxon>
        <taxon>Fungi</taxon>
        <taxon>Dikarya</taxon>
        <taxon>Ascomycota</taxon>
        <taxon>Pezizomycotina</taxon>
        <taxon>Dothideomycetes</taxon>
        <taxon>Dothideomycetidae</taxon>
        <taxon>Mycosphaerellales</taxon>
        <taxon>Mycosphaerellaceae</taxon>
        <taxon>Fulvia</taxon>
    </lineage>
</organism>
<feature type="chain" id="PRO_0000445895" description="Short chain dehydrogenase claC">
    <location>
        <begin position="1"/>
        <end position="267"/>
    </location>
</feature>
<feature type="active site" description="Proton donor" evidence="2">
    <location>
        <position position="149"/>
    </location>
</feature>
<feature type="active site" description="Proton donor" evidence="2">
    <location>
        <position position="150"/>
    </location>
</feature>
<feature type="active site" description="Proton acceptor" evidence="3">
    <location>
        <position position="164"/>
    </location>
</feature>
<feature type="active site" description="Lowers pKa of active site Tyr" evidence="2">
    <location>
        <position position="168"/>
    </location>
</feature>
<feature type="binding site" evidence="1">
    <location>
        <position position="27"/>
    </location>
    <ligand>
        <name>NADP(+)</name>
        <dbReference type="ChEBI" id="CHEBI:58349"/>
    </ligand>
</feature>
<feature type="binding site" evidence="1">
    <location>
        <position position="73"/>
    </location>
    <ligand>
        <name>NADP(+)</name>
        <dbReference type="ChEBI" id="CHEBI:58349"/>
    </ligand>
</feature>
<feature type="binding site" evidence="2">
    <location>
        <position position="100"/>
    </location>
    <ligand>
        <name>NADP(+)</name>
        <dbReference type="ChEBI" id="CHEBI:58349"/>
    </ligand>
</feature>
<feature type="binding site" evidence="1">
    <location>
        <position position="133"/>
    </location>
    <ligand>
        <name>NADP(+)</name>
        <dbReference type="ChEBI" id="CHEBI:58349"/>
    </ligand>
</feature>
<feature type="binding site" evidence="2">
    <location>
        <position position="164"/>
    </location>
    <ligand>
        <name>NADP(+)</name>
        <dbReference type="ChEBI" id="CHEBI:58349"/>
    </ligand>
</feature>
<feature type="binding site" evidence="2">
    <location>
        <position position="168"/>
    </location>
    <ligand>
        <name>NADP(+)</name>
        <dbReference type="ChEBI" id="CHEBI:58349"/>
    </ligand>
</feature>
<feature type="binding site" evidence="1">
    <location>
        <position position="199"/>
    </location>
    <ligand>
        <name>NADP(+)</name>
        <dbReference type="ChEBI" id="CHEBI:58349"/>
    </ligand>
</feature>